<name>HTPG_GEOSL</name>
<keyword id="KW-0067">ATP-binding</keyword>
<keyword id="KW-0143">Chaperone</keyword>
<keyword id="KW-0963">Cytoplasm</keyword>
<keyword id="KW-0547">Nucleotide-binding</keyword>
<keyword id="KW-1185">Reference proteome</keyword>
<keyword id="KW-0346">Stress response</keyword>
<gene>
    <name evidence="1" type="primary">htpG</name>
    <name type="ordered locus">GSU2390</name>
</gene>
<reference key="1">
    <citation type="journal article" date="2003" name="Science">
        <title>Genome of Geobacter sulfurreducens: metal reduction in subsurface environments.</title>
        <authorList>
            <person name="Methe B.A."/>
            <person name="Nelson K.E."/>
            <person name="Eisen J.A."/>
            <person name="Paulsen I.T."/>
            <person name="Nelson W.C."/>
            <person name="Heidelberg J.F."/>
            <person name="Wu D."/>
            <person name="Wu M."/>
            <person name="Ward N.L."/>
            <person name="Beanan M.J."/>
            <person name="Dodson R.J."/>
            <person name="Madupu R."/>
            <person name="Brinkac L.M."/>
            <person name="Daugherty S.C."/>
            <person name="DeBoy R.T."/>
            <person name="Durkin A.S."/>
            <person name="Gwinn M.L."/>
            <person name="Kolonay J.F."/>
            <person name="Sullivan S.A."/>
            <person name="Haft D.H."/>
            <person name="Selengut J."/>
            <person name="Davidsen T.M."/>
            <person name="Zafar N."/>
            <person name="White O."/>
            <person name="Tran B."/>
            <person name="Romero C."/>
            <person name="Forberger H.A."/>
            <person name="Weidman J.F."/>
            <person name="Khouri H.M."/>
            <person name="Feldblyum T.V."/>
            <person name="Utterback T.R."/>
            <person name="Van Aken S.E."/>
            <person name="Lovley D.R."/>
            <person name="Fraser C.M."/>
        </authorList>
    </citation>
    <scope>NUCLEOTIDE SEQUENCE [LARGE SCALE GENOMIC DNA]</scope>
    <source>
        <strain>ATCC 51573 / DSM 12127 / PCA</strain>
    </source>
</reference>
<organism>
    <name type="scientific">Geobacter sulfurreducens (strain ATCC 51573 / DSM 12127 / PCA)</name>
    <dbReference type="NCBI Taxonomy" id="243231"/>
    <lineage>
        <taxon>Bacteria</taxon>
        <taxon>Pseudomonadati</taxon>
        <taxon>Thermodesulfobacteriota</taxon>
        <taxon>Desulfuromonadia</taxon>
        <taxon>Geobacterales</taxon>
        <taxon>Geobacteraceae</taxon>
        <taxon>Geobacter</taxon>
    </lineage>
</organism>
<sequence length="650" mass="73731">MSKTVKKFETEVQQLLDLVIHSLYSNKDIFLRELISNASDAIDKVLFESHQNAAVIEGEPEGKIKLIPDKDAGTLTIRDNGVGMTLEEVEKNIGTIAHSGTKAFLANLKEQNVADHPELIGQFGVGFYASFMVADRVTLVTRRAGHDKAAGVRWESTGDGTYTVEECAKETRGTEITLHLKEEMKEYLDEWKIRSIVRKYSDYVQYPIVMDVTRTEVPKGVNGEEIEGAGTIEKTEEETLNSMKAIWTRSKSEVTEEEYEEFYKHVSHDFEKPLKTIHYSAEGTSEFKALLYLPAHKPFDLFMPERKKGVQLYVRRVFITDSCEQLLPDYLRFVKGVVDSSDLPLNVSREILQEDVQIKRIQKSLVSKILSTLSEMREKEADSYLDFYKEFGPVLKEGVHFDYANRDKLQDLLLFESTATDAGSFVSLKEYVERMPEGQEEIYFITGTSRAALEQSPHLEIFRKKGYEVLFLTDPVDEWVVQGLPEYGGKKLKAVDRGDVIPATEEEKKEQEAKREEAAKQYGDLLSFVKEKLAERVKEVRLSNRLTDSACCLVADEHGLNANMERILRAMNQTVPESKRILELNPDHPIMQVMATLFGKDKTNPRLADYCDLLYDQALLTEGSPIADPLRFTRLVAELMVADGKAAAGE</sequence>
<proteinExistence type="inferred from homology"/>
<accession>P61185</accession>
<comment type="function">
    <text evidence="1">Molecular chaperone. Has ATPase activity.</text>
</comment>
<comment type="subunit">
    <text evidence="1">Homodimer.</text>
</comment>
<comment type="subcellular location">
    <subcellularLocation>
        <location evidence="1">Cytoplasm</location>
    </subcellularLocation>
</comment>
<comment type="similarity">
    <text evidence="1">Belongs to the heat shock protein 90 family.</text>
</comment>
<protein>
    <recommendedName>
        <fullName evidence="1">Chaperone protein HtpG</fullName>
    </recommendedName>
    <alternativeName>
        <fullName evidence="1">Heat shock protein HtpG</fullName>
    </alternativeName>
    <alternativeName>
        <fullName evidence="1">High temperature protein G</fullName>
    </alternativeName>
</protein>
<dbReference type="EMBL" id="AE017180">
    <property type="protein sequence ID" value="AAR35763.1"/>
    <property type="molecule type" value="Genomic_DNA"/>
</dbReference>
<dbReference type="RefSeq" id="NP_953436.1">
    <property type="nucleotide sequence ID" value="NC_002939.5"/>
</dbReference>
<dbReference type="RefSeq" id="WP_010943026.1">
    <property type="nucleotide sequence ID" value="NC_002939.5"/>
</dbReference>
<dbReference type="SMR" id="P61185"/>
<dbReference type="FunCoup" id="P61185">
    <property type="interactions" value="442"/>
</dbReference>
<dbReference type="STRING" id="243231.GSU2390"/>
<dbReference type="EnsemblBacteria" id="AAR35763">
    <property type="protein sequence ID" value="AAR35763"/>
    <property type="gene ID" value="GSU2390"/>
</dbReference>
<dbReference type="KEGG" id="gsu:GSU2390"/>
<dbReference type="PATRIC" id="fig|243231.5.peg.2418"/>
<dbReference type="eggNOG" id="COG0326">
    <property type="taxonomic scope" value="Bacteria"/>
</dbReference>
<dbReference type="HOGENOM" id="CLU_006684_3_0_7"/>
<dbReference type="InParanoid" id="P61185"/>
<dbReference type="OrthoDB" id="9802640at2"/>
<dbReference type="Proteomes" id="UP000000577">
    <property type="component" value="Chromosome"/>
</dbReference>
<dbReference type="GO" id="GO:0005829">
    <property type="term" value="C:cytosol"/>
    <property type="evidence" value="ECO:0000318"/>
    <property type="project" value="GO_Central"/>
</dbReference>
<dbReference type="GO" id="GO:0005524">
    <property type="term" value="F:ATP binding"/>
    <property type="evidence" value="ECO:0000318"/>
    <property type="project" value="GO_Central"/>
</dbReference>
<dbReference type="GO" id="GO:0016887">
    <property type="term" value="F:ATP hydrolysis activity"/>
    <property type="evidence" value="ECO:0000318"/>
    <property type="project" value="GO_Central"/>
</dbReference>
<dbReference type="GO" id="GO:0140662">
    <property type="term" value="F:ATP-dependent protein folding chaperone"/>
    <property type="evidence" value="ECO:0007669"/>
    <property type="project" value="InterPro"/>
</dbReference>
<dbReference type="GO" id="GO:0051082">
    <property type="term" value="F:unfolded protein binding"/>
    <property type="evidence" value="ECO:0000318"/>
    <property type="project" value="GO_Central"/>
</dbReference>
<dbReference type="GO" id="GO:0006974">
    <property type="term" value="P:DNA damage response"/>
    <property type="evidence" value="ECO:0000318"/>
    <property type="project" value="GO_Central"/>
</dbReference>
<dbReference type="GO" id="GO:0006457">
    <property type="term" value="P:protein folding"/>
    <property type="evidence" value="ECO:0000318"/>
    <property type="project" value="GO_Central"/>
</dbReference>
<dbReference type="GO" id="GO:0009408">
    <property type="term" value="P:response to heat"/>
    <property type="evidence" value="ECO:0000318"/>
    <property type="project" value="GO_Central"/>
</dbReference>
<dbReference type="CDD" id="cd16927">
    <property type="entry name" value="HATPase_Hsp90-like"/>
    <property type="match status" value="1"/>
</dbReference>
<dbReference type="FunFam" id="1.20.120.790:FF:000006">
    <property type="entry name" value="Chaperone protein HtpG"/>
    <property type="match status" value="1"/>
</dbReference>
<dbReference type="FunFam" id="3.30.230.80:FF:000002">
    <property type="entry name" value="Molecular chaperone HtpG"/>
    <property type="match status" value="1"/>
</dbReference>
<dbReference type="FunFam" id="3.30.565.10:FF:000009">
    <property type="entry name" value="Molecular chaperone HtpG"/>
    <property type="match status" value="1"/>
</dbReference>
<dbReference type="Gene3D" id="3.30.230.80">
    <property type="match status" value="1"/>
</dbReference>
<dbReference type="Gene3D" id="3.40.50.11260">
    <property type="match status" value="1"/>
</dbReference>
<dbReference type="Gene3D" id="1.20.120.790">
    <property type="entry name" value="Heat shock protein 90, C-terminal domain"/>
    <property type="match status" value="1"/>
</dbReference>
<dbReference type="Gene3D" id="3.30.565.10">
    <property type="entry name" value="Histidine kinase-like ATPase, C-terminal domain"/>
    <property type="match status" value="1"/>
</dbReference>
<dbReference type="HAMAP" id="MF_00505">
    <property type="entry name" value="HSP90"/>
    <property type="match status" value="1"/>
</dbReference>
<dbReference type="InterPro" id="IPR036890">
    <property type="entry name" value="HATPase_C_sf"/>
</dbReference>
<dbReference type="InterPro" id="IPR019805">
    <property type="entry name" value="Heat_shock_protein_90_CS"/>
</dbReference>
<dbReference type="InterPro" id="IPR037196">
    <property type="entry name" value="HSP90_C"/>
</dbReference>
<dbReference type="InterPro" id="IPR001404">
    <property type="entry name" value="Hsp90_fam"/>
</dbReference>
<dbReference type="InterPro" id="IPR020575">
    <property type="entry name" value="Hsp90_N"/>
</dbReference>
<dbReference type="InterPro" id="IPR020568">
    <property type="entry name" value="Ribosomal_Su5_D2-typ_SF"/>
</dbReference>
<dbReference type="NCBIfam" id="NF003555">
    <property type="entry name" value="PRK05218.1"/>
    <property type="match status" value="1"/>
</dbReference>
<dbReference type="PANTHER" id="PTHR11528">
    <property type="entry name" value="HEAT SHOCK PROTEIN 90 FAMILY MEMBER"/>
    <property type="match status" value="1"/>
</dbReference>
<dbReference type="Pfam" id="PF13589">
    <property type="entry name" value="HATPase_c_3"/>
    <property type="match status" value="1"/>
</dbReference>
<dbReference type="Pfam" id="PF00183">
    <property type="entry name" value="HSP90"/>
    <property type="match status" value="1"/>
</dbReference>
<dbReference type="PIRSF" id="PIRSF002583">
    <property type="entry name" value="Hsp90"/>
    <property type="match status" value="1"/>
</dbReference>
<dbReference type="PRINTS" id="PR00775">
    <property type="entry name" value="HEATSHOCK90"/>
</dbReference>
<dbReference type="SMART" id="SM00387">
    <property type="entry name" value="HATPase_c"/>
    <property type="match status" value="1"/>
</dbReference>
<dbReference type="SUPFAM" id="SSF55874">
    <property type="entry name" value="ATPase domain of HSP90 chaperone/DNA topoisomerase II/histidine kinase"/>
    <property type="match status" value="1"/>
</dbReference>
<dbReference type="SUPFAM" id="SSF110942">
    <property type="entry name" value="HSP90 C-terminal domain"/>
    <property type="match status" value="1"/>
</dbReference>
<dbReference type="SUPFAM" id="SSF54211">
    <property type="entry name" value="Ribosomal protein S5 domain 2-like"/>
    <property type="match status" value="1"/>
</dbReference>
<dbReference type="PROSITE" id="PS00298">
    <property type="entry name" value="HSP90"/>
    <property type="match status" value="1"/>
</dbReference>
<evidence type="ECO:0000255" key="1">
    <source>
        <dbReference type="HAMAP-Rule" id="MF_00505"/>
    </source>
</evidence>
<feature type="chain" id="PRO_0000062989" description="Chaperone protein HtpG">
    <location>
        <begin position="1"/>
        <end position="650"/>
    </location>
</feature>
<feature type="region of interest" description="A; substrate-binding" evidence="1">
    <location>
        <begin position="1"/>
        <end position="349"/>
    </location>
</feature>
<feature type="region of interest" description="B" evidence="1">
    <location>
        <begin position="350"/>
        <end position="566"/>
    </location>
</feature>
<feature type="region of interest" description="C" evidence="1">
    <location>
        <begin position="567"/>
        <end position="650"/>
    </location>
</feature>